<dbReference type="EMBL" id="U38473">
    <property type="protein sequence ID" value="AAC77839.1"/>
    <property type="molecule type" value="Genomic_DNA"/>
</dbReference>
<dbReference type="EMBL" id="U00096">
    <property type="protein sequence ID" value="AAC75117.1"/>
    <property type="molecule type" value="Genomic_DNA"/>
</dbReference>
<dbReference type="EMBL" id="AP009048">
    <property type="protein sequence ID" value="BAE76573.1"/>
    <property type="molecule type" value="Genomic_DNA"/>
</dbReference>
<dbReference type="PIR" id="G64971">
    <property type="entry name" value="G64971"/>
</dbReference>
<dbReference type="RefSeq" id="NP_416560.1">
    <property type="nucleotide sequence ID" value="NC_000913.3"/>
</dbReference>
<dbReference type="RefSeq" id="WP_000107816.1">
    <property type="nucleotide sequence ID" value="NZ_STEB01000002.1"/>
</dbReference>
<dbReference type="BioGRID" id="4259688">
    <property type="interactions" value="157"/>
</dbReference>
<dbReference type="DIP" id="DIP-11120N"/>
<dbReference type="FunCoup" id="P71238">
    <property type="interactions" value="110"/>
</dbReference>
<dbReference type="IntAct" id="P71238">
    <property type="interactions" value="1"/>
</dbReference>
<dbReference type="STRING" id="511145.b2056"/>
<dbReference type="PaxDb" id="511145-b2056"/>
<dbReference type="EnsemblBacteria" id="AAC75117">
    <property type="protein sequence ID" value="AAC75117"/>
    <property type="gene ID" value="b2056"/>
</dbReference>
<dbReference type="GeneID" id="75203919"/>
<dbReference type="GeneID" id="946550"/>
<dbReference type="KEGG" id="ecj:JW2041"/>
<dbReference type="KEGG" id="eco:b2056"/>
<dbReference type="KEGG" id="ecoc:C3026_11570"/>
<dbReference type="PATRIC" id="fig|511145.12.peg.2133"/>
<dbReference type="EchoBASE" id="EB3342"/>
<dbReference type="eggNOG" id="ENOG502ZA5M">
    <property type="taxonomic scope" value="Bacteria"/>
</dbReference>
<dbReference type="HOGENOM" id="CLU_056700_0_0_6"/>
<dbReference type="InParanoid" id="P71238"/>
<dbReference type="OMA" id="WRSMSTS"/>
<dbReference type="OrthoDB" id="6565253at2"/>
<dbReference type="PhylomeDB" id="P71238"/>
<dbReference type="BioCyc" id="EcoCyc:G7101-MONOMER"/>
<dbReference type="BioCyc" id="MetaCyc:G7101-MONOMER"/>
<dbReference type="UniPathway" id="UPA00936"/>
<dbReference type="PRO" id="PR:P71238"/>
<dbReference type="Proteomes" id="UP000000625">
    <property type="component" value="Chromosome"/>
</dbReference>
<dbReference type="GO" id="GO:0005886">
    <property type="term" value="C:plasma membrane"/>
    <property type="evidence" value="ECO:0000314"/>
    <property type="project" value="EcoCyc"/>
</dbReference>
<dbReference type="GO" id="GO:0046377">
    <property type="term" value="P:colanic acid metabolic process"/>
    <property type="evidence" value="ECO:0000317"/>
    <property type="project" value="EcoCyc"/>
</dbReference>
<dbReference type="GO" id="GO:0009103">
    <property type="term" value="P:lipopolysaccharide biosynthetic process"/>
    <property type="evidence" value="ECO:0007669"/>
    <property type="project" value="UniProtKB-KW"/>
</dbReference>
<dbReference type="GO" id="GO:0045228">
    <property type="term" value="P:slime layer polysaccharide biosynthetic process"/>
    <property type="evidence" value="ECO:0007669"/>
    <property type="project" value="UniProtKB-UniPathway"/>
</dbReference>
<dbReference type="InterPro" id="IPR024013">
    <property type="entry name" value="Colanic_acid_synth_WcaD"/>
</dbReference>
<dbReference type="NCBIfam" id="TIGR04010">
    <property type="entry name" value="WcaD"/>
    <property type="match status" value="1"/>
</dbReference>
<sequence length="405" mass="45409">MSTSIRICSYLLLPLIYLLVNVKIAQLGESFPITIVTFLPVLLLLFLERISVKKLMIALGIGAGLTAFNYLFGQSLDASKYVTSTMLFVYIVIIIGMVWSIRFKTISPHNHRKILRFFYLVVGLVVALAAVEMAQIILTGGSSIMESISKYLIYSNSYVLNFIKFGGKRTTALYFEPAFFALALISIWLSIKQFGIKTPKTDAMILAGIILSGSFSGVMTFILFYLLEWAFQYLNKEAIKKKLPLALISLAVFLVGVVIAFPYISTRLGDLGTEGSSSYYRIVGPLVMVGYSLTHIDGVVRFGSLYEYVASFGIFNGADVGKTIDNGLYLLIIYFSWFAVFLSLWYMGKVIKMMINAFGDNRNFRVQLYLFTPVSLFFTGSIFSPEYAFLIVCPFILRKALNITR</sequence>
<name>WCAD_ECOLI</name>
<accession>P71238</accession>
<accession>P76385</accession>
<accession>Q2MAY3</accession>
<reference key="1">
    <citation type="journal article" date="1996" name="J. Bacteriol.">
        <title>Organization of the Escherichia coli K-12 gene cluster responsible for production of the extracellular polysaccharide colanic acid.</title>
        <authorList>
            <person name="Stevenson G."/>
            <person name="Andrianopoulos K."/>
            <person name="Hobbs M."/>
            <person name="Reeves P.R."/>
        </authorList>
    </citation>
    <scope>NUCLEOTIDE SEQUENCE [GENOMIC DNA]</scope>
    <source>
        <strain>K12</strain>
    </source>
</reference>
<reference key="2">
    <citation type="submission" date="1998-04" db="EMBL/GenBank/DDBJ databases">
        <authorList>
            <person name="Reeves P.R."/>
        </authorList>
    </citation>
    <scope>SEQUENCE REVISION</scope>
    <source>
        <strain>K12</strain>
    </source>
</reference>
<reference key="3">
    <citation type="journal article" date="1997" name="Science">
        <title>The complete genome sequence of Escherichia coli K-12.</title>
        <authorList>
            <person name="Blattner F.R."/>
            <person name="Plunkett G. III"/>
            <person name="Bloch C.A."/>
            <person name="Perna N.T."/>
            <person name="Burland V."/>
            <person name="Riley M."/>
            <person name="Collado-Vides J."/>
            <person name="Glasner J.D."/>
            <person name="Rode C.K."/>
            <person name="Mayhew G.F."/>
            <person name="Gregor J."/>
            <person name="Davis N.W."/>
            <person name="Kirkpatrick H.A."/>
            <person name="Goeden M.A."/>
            <person name="Rose D.J."/>
            <person name="Mau B."/>
            <person name="Shao Y."/>
        </authorList>
    </citation>
    <scope>NUCLEOTIDE SEQUENCE [LARGE SCALE GENOMIC DNA]</scope>
    <source>
        <strain>K12 / MG1655 / ATCC 47076</strain>
    </source>
</reference>
<reference key="4">
    <citation type="journal article" date="2006" name="Mol. Syst. Biol.">
        <title>Highly accurate genome sequences of Escherichia coli K-12 strains MG1655 and W3110.</title>
        <authorList>
            <person name="Hayashi K."/>
            <person name="Morooka N."/>
            <person name="Yamamoto Y."/>
            <person name="Fujita K."/>
            <person name="Isono K."/>
            <person name="Choi S."/>
            <person name="Ohtsubo E."/>
            <person name="Baba T."/>
            <person name="Wanner B.L."/>
            <person name="Mori H."/>
            <person name="Horiuchi T."/>
        </authorList>
    </citation>
    <scope>NUCLEOTIDE SEQUENCE [LARGE SCALE GENOMIC DNA]</scope>
    <source>
        <strain>K12 / W3110 / ATCC 27325 / DSM 5911</strain>
    </source>
</reference>
<reference key="5">
    <citation type="journal article" date="2005" name="Science">
        <title>Global topology analysis of the Escherichia coli inner membrane proteome.</title>
        <authorList>
            <person name="Daley D.O."/>
            <person name="Rapp M."/>
            <person name="Granseth E."/>
            <person name="Melen K."/>
            <person name="Drew D."/>
            <person name="von Heijne G."/>
        </authorList>
    </citation>
    <scope>SUBCELLULAR LOCATION</scope>
    <source>
        <strain>K12 / MG1655 / ATCC 47076</strain>
    </source>
</reference>
<organism>
    <name type="scientific">Escherichia coli (strain K12)</name>
    <dbReference type="NCBI Taxonomy" id="83333"/>
    <lineage>
        <taxon>Bacteria</taxon>
        <taxon>Pseudomonadati</taxon>
        <taxon>Pseudomonadota</taxon>
        <taxon>Gammaproteobacteria</taxon>
        <taxon>Enterobacterales</taxon>
        <taxon>Enterobacteriaceae</taxon>
        <taxon>Escherichia</taxon>
    </lineage>
</organism>
<feature type="chain" id="PRO_0000065955" description="Putative colanic acid polymerase">
    <location>
        <begin position="1"/>
        <end position="405"/>
    </location>
</feature>
<feature type="transmembrane region" description="Helical" evidence="1">
    <location>
        <begin position="5"/>
        <end position="25"/>
    </location>
</feature>
<feature type="transmembrane region" description="Helical" evidence="1">
    <location>
        <begin position="27"/>
        <end position="47"/>
    </location>
</feature>
<feature type="transmembrane region" description="Helical" evidence="1">
    <location>
        <begin position="55"/>
        <end position="75"/>
    </location>
</feature>
<feature type="transmembrane region" description="Helical" evidence="1">
    <location>
        <begin position="81"/>
        <end position="101"/>
    </location>
</feature>
<feature type="transmembrane region" description="Helical" evidence="1">
    <location>
        <begin position="117"/>
        <end position="137"/>
    </location>
</feature>
<feature type="transmembrane region" description="Helical" evidence="1">
    <location>
        <begin position="171"/>
        <end position="191"/>
    </location>
</feature>
<feature type="transmembrane region" description="Helical" evidence="1">
    <location>
        <begin position="204"/>
        <end position="224"/>
    </location>
</feature>
<feature type="transmembrane region" description="Helical" evidence="1">
    <location>
        <begin position="244"/>
        <end position="264"/>
    </location>
</feature>
<feature type="transmembrane region" description="Helical" evidence="1">
    <location>
        <begin position="282"/>
        <end position="302"/>
    </location>
</feature>
<feature type="transmembrane region" description="Helical" evidence="1">
    <location>
        <begin position="327"/>
        <end position="347"/>
    </location>
</feature>
<feature type="transmembrane region" description="Helical" evidence="1">
    <location>
        <begin position="376"/>
        <end position="396"/>
    </location>
</feature>
<feature type="sequence conflict" description="In Ref. 2; AAC77839." evidence="3" ref="2">
    <original>P</original>
    <variation>A</variation>
    <location>
        <position position="108"/>
    </location>
</feature>
<protein>
    <recommendedName>
        <fullName>Putative colanic acid polymerase</fullName>
    </recommendedName>
</protein>
<proteinExistence type="predicted"/>
<evidence type="ECO:0000255" key="1"/>
<evidence type="ECO:0000269" key="2">
    <source>
    </source>
</evidence>
<evidence type="ECO:0000305" key="3"/>
<keyword id="KW-0997">Cell inner membrane</keyword>
<keyword id="KW-1003">Cell membrane</keyword>
<keyword id="KW-0448">Lipopolysaccharide biosynthesis</keyword>
<keyword id="KW-0472">Membrane</keyword>
<keyword id="KW-1185">Reference proteome</keyword>
<keyword id="KW-0812">Transmembrane</keyword>
<keyword id="KW-1133">Transmembrane helix</keyword>
<comment type="pathway">
    <text>Slime biogenesis; slime polysaccharide biosynthesis.</text>
</comment>
<comment type="subcellular location">
    <subcellularLocation>
        <location evidence="2">Cell inner membrane</location>
        <topology evidence="2">Multi-pass membrane protein</topology>
    </subcellularLocation>
</comment>
<gene>
    <name type="primary">wcaD</name>
    <name type="ordered locus">b2056</name>
    <name type="ordered locus">JW2041</name>
</gene>